<keyword id="KW-0408">Iron</keyword>
<keyword id="KW-0479">Metal-binding</keyword>
<keyword id="KW-0503">Monooxygenase</keyword>
<keyword id="KW-0560">Oxidoreductase</keyword>
<keyword id="KW-1185">Reference proteome</keyword>
<keyword id="KW-0724">Serotonin biosynthesis</keyword>
<reference key="1">
    <citation type="journal article" date="1994" name="J. Neurochem.">
        <title>Tryptophan hydroxylase expression is regulated by a circadian clock in Xenopus laevis retina.</title>
        <authorList>
            <person name="Green C.B."/>
            <person name="Besharse J.C."/>
        </authorList>
    </citation>
    <scope>NUCLEOTIDE SEQUENCE [MRNA]</scope>
    <source>
        <tissue>Retina</tissue>
    </source>
</reference>
<feature type="chain" id="PRO_0000205573" description="Tryptophan 5-hydroxylase">
    <location>
        <begin position="1"/>
        <end position="481"/>
    </location>
</feature>
<feature type="domain" description="ACT" evidence="4">
    <location>
        <begin position="56"/>
        <end position="131"/>
    </location>
</feature>
<feature type="binding site" evidence="3">
    <location>
        <position position="272"/>
    </location>
    <ligand>
        <name>L-tryptophan</name>
        <dbReference type="ChEBI" id="CHEBI:57912"/>
    </ligand>
</feature>
<feature type="binding site" evidence="3">
    <location>
        <position position="294"/>
    </location>
    <ligand>
        <name>L-tryptophan</name>
        <dbReference type="ChEBI" id="CHEBI:57912"/>
    </ligand>
</feature>
<feature type="binding site" evidence="3">
    <location>
        <position position="302"/>
    </location>
    <ligand>
        <name>L-tryptophan</name>
        <dbReference type="ChEBI" id="CHEBI:57912"/>
    </ligand>
</feature>
<feature type="binding site" evidence="3">
    <location>
        <position position="309"/>
    </location>
    <ligand>
        <name>Fe cation</name>
        <dbReference type="ChEBI" id="CHEBI:24875"/>
    </ligand>
</feature>
<feature type="binding site" evidence="3">
    <location>
        <position position="314"/>
    </location>
    <ligand>
        <name>Fe cation</name>
        <dbReference type="ChEBI" id="CHEBI:24875"/>
    </ligand>
</feature>
<feature type="binding site" evidence="3">
    <location>
        <position position="354"/>
    </location>
    <ligand>
        <name>Fe cation</name>
        <dbReference type="ChEBI" id="CHEBI:24875"/>
    </ligand>
</feature>
<feature type="binding site" evidence="3">
    <location>
        <position position="373"/>
    </location>
    <ligand>
        <name>L-tryptophan</name>
        <dbReference type="ChEBI" id="CHEBI:57912"/>
    </ligand>
</feature>
<feature type="binding site" evidence="3">
    <location>
        <position position="403"/>
    </location>
    <ligand>
        <name>L-tryptophan</name>
        <dbReference type="ChEBI" id="CHEBI:57912"/>
    </ligand>
</feature>
<name>TPH1_XENLA</name>
<sequence length="481" mass="55406">MYSNRKECPRRVKSFDSVNSGLDENQINNEFNKSTYIKIEDNKEYSENVCERGKASVIFSLKNEIGGLVKALKLFQEKHVNLIHIESRKSKRRNSEFEIFVDCDSNREQLNEIFQLLKPHVNVISMSPPENFTVQEDDMESVPWFPKKISDLDKCANRVLMYGSDLDADHPGFKDNVYRKRRKYFADVAMSYKYGDPIPHIEFTEEEIQTWGTVFRELNKLYPTHACREYLKNLPLLSKHCGYREDNIPQLEDVSRFLRERTGFTIRPVAGYLSPRDFLAGLAFRVFHCTQYVRHDSDPLNTPEPDTCHELLGHVPLLAEPSFAQFSQEIGLASLGASDEAVQKLATCYFFTVEFGLCKQEGKLKVYGAGLLSSISELKHSLSGNAKVKPFDPMVTCNQECIITSFQELYFVSESFEEAKEKMREFAKTIQRPFGLKYNPFTQSVDILKDTKSIAMVVRELRHELDIVNDALNKMNKQLGV</sequence>
<protein>
    <recommendedName>
        <fullName>Tryptophan 5-hydroxylase</fullName>
        <ecNumber evidence="1">1.14.16.4</ecNumber>
    </recommendedName>
    <alternativeName>
        <fullName>Tryptophan 5-monooxygenase</fullName>
    </alternativeName>
</protein>
<evidence type="ECO:0000250" key="1">
    <source>
        <dbReference type="UniProtKB" id="P17532"/>
    </source>
</evidence>
<evidence type="ECO:0000250" key="2">
    <source>
        <dbReference type="UniProtKB" id="P17752"/>
    </source>
</evidence>
<evidence type="ECO:0000250" key="3">
    <source>
        <dbReference type="UniProtKB" id="P70080"/>
    </source>
</evidence>
<evidence type="ECO:0000255" key="4">
    <source>
        <dbReference type="PROSITE-ProRule" id="PRU01007"/>
    </source>
</evidence>
<evidence type="ECO:0000305" key="5"/>
<comment type="function">
    <text evidence="1">Oxidizes L-tryptophan to 5-hydroxy-l-tryptophan in the rate-determining step of serotonin biosynthesis.</text>
</comment>
<comment type="catalytic activity">
    <reaction evidence="1">
        <text>(6R)-L-erythro-5,6,7,8-tetrahydrobiopterin + L-tryptophan + O2 = 5-hydroxy-L-tryptophan + (4aS,6R)-4a-hydroxy-L-erythro-5,6,7,8-tetrahydrobiopterin</text>
        <dbReference type="Rhea" id="RHEA:16709"/>
        <dbReference type="ChEBI" id="CHEBI:15379"/>
        <dbReference type="ChEBI" id="CHEBI:15642"/>
        <dbReference type="ChEBI" id="CHEBI:57912"/>
        <dbReference type="ChEBI" id="CHEBI:58266"/>
        <dbReference type="ChEBI" id="CHEBI:59560"/>
        <dbReference type="EC" id="1.14.16.4"/>
    </reaction>
</comment>
<comment type="cofactor">
    <cofactor evidence="2">
        <name>Fe(2+)</name>
        <dbReference type="ChEBI" id="CHEBI:29033"/>
    </cofactor>
</comment>
<comment type="pathway">
    <text evidence="1">Aromatic compound metabolism; serotonin biosynthesis; serotonin from L-tryptophan: step 1/2.</text>
</comment>
<comment type="subunit">
    <text evidence="3">Homotetramer.</text>
</comment>
<comment type="similarity">
    <text evidence="5">Belongs to the biopterin-dependent aromatic amino acid hydroxylase family.</text>
</comment>
<gene>
    <name type="primary">tph1</name>
</gene>
<accession>Q92142</accession>
<organism>
    <name type="scientific">Xenopus laevis</name>
    <name type="common">African clawed frog</name>
    <dbReference type="NCBI Taxonomy" id="8355"/>
    <lineage>
        <taxon>Eukaryota</taxon>
        <taxon>Metazoa</taxon>
        <taxon>Chordata</taxon>
        <taxon>Craniata</taxon>
        <taxon>Vertebrata</taxon>
        <taxon>Euteleostomi</taxon>
        <taxon>Amphibia</taxon>
        <taxon>Batrachia</taxon>
        <taxon>Anura</taxon>
        <taxon>Pipoidea</taxon>
        <taxon>Pipidae</taxon>
        <taxon>Xenopodinae</taxon>
        <taxon>Xenopus</taxon>
        <taxon>Xenopus</taxon>
    </lineage>
</organism>
<proteinExistence type="evidence at transcript level"/>
<dbReference type="EC" id="1.14.16.4" evidence="1"/>
<dbReference type="EMBL" id="L20679">
    <property type="protein sequence ID" value="AAA21306.1"/>
    <property type="molecule type" value="mRNA"/>
</dbReference>
<dbReference type="PIR" id="I51567">
    <property type="entry name" value="I51567"/>
</dbReference>
<dbReference type="RefSeq" id="NP_001080923.1">
    <property type="nucleotide sequence ID" value="NM_001087454.1"/>
</dbReference>
<dbReference type="SMR" id="Q92142"/>
<dbReference type="GeneID" id="387560"/>
<dbReference type="KEGG" id="xla:387560"/>
<dbReference type="AGR" id="Xenbase:XB-GENE-996927"/>
<dbReference type="CTD" id="387560"/>
<dbReference type="Xenbase" id="XB-GENE-996927">
    <property type="gene designation" value="tph1.L"/>
</dbReference>
<dbReference type="OrthoDB" id="983542at2759"/>
<dbReference type="UniPathway" id="UPA00846">
    <property type="reaction ID" value="UER00799"/>
</dbReference>
<dbReference type="Proteomes" id="UP000186698">
    <property type="component" value="Chromosome 4L"/>
</dbReference>
<dbReference type="Bgee" id="387560">
    <property type="expression patterns" value="Expressed in zone of skin and 8 other cell types or tissues"/>
</dbReference>
<dbReference type="GO" id="GO:0043005">
    <property type="term" value="C:neuron projection"/>
    <property type="evidence" value="ECO:0000318"/>
    <property type="project" value="GO_Central"/>
</dbReference>
<dbReference type="GO" id="GO:0005506">
    <property type="term" value="F:iron ion binding"/>
    <property type="evidence" value="ECO:0007669"/>
    <property type="project" value="InterPro"/>
</dbReference>
<dbReference type="GO" id="GO:0004510">
    <property type="term" value="F:tryptophan 5-monooxygenase activity"/>
    <property type="evidence" value="ECO:0000318"/>
    <property type="project" value="GO_Central"/>
</dbReference>
<dbReference type="GO" id="GO:0009072">
    <property type="term" value="P:aromatic amino acid metabolic process"/>
    <property type="evidence" value="ECO:0007669"/>
    <property type="project" value="InterPro"/>
</dbReference>
<dbReference type="GO" id="GO:0002576">
    <property type="term" value="P:platelet degranulation"/>
    <property type="evidence" value="ECO:0000250"/>
    <property type="project" value="UniProtKB"/>
</dbReference>
<dbReference type="GO" id="GO:1900046">
    <property type="term" value="P:regulation of hemostasis"/>
    <property type="evidence" value="ECO:0000250"/>
    <property type="project" value="UniProtKB"/>
</dbReference>
<dbReference type="GO" id="GO:0042427">
    <property type="term" value="P:serotonin biosynthetic process"/>
    <property type="evidence" value="ECO:0000250"/>
    <property type="project" value="UniProtKB"/>
</dbReference>
<dbReference type="CDD" id="cd04929">
    <property type="entry name" value="ACT_TPH"/>
    <property type="match status" value="1"/>
</dbReference>
<dbReference type="CDD" id="cd03346">
    <property type="entry name" value="eu_TrpOH"/>
    <property type="match status" value="1"/>
</dbReference>
<dbReference type="FunFam" id="1.10.800.10:FF:000001">
    <property type="entry name" value="tryptophan 5-hydroxylase 1"/>
    <property type="match status" value="1"/>
</dbReference>
<dbReference type="Gene3D" id="1.10.800.10">
    <property type="entry name" value="Aromatic amino acid hydroxylase"/>
    <property type="match status" value="1"/>
</dbReference>
<dbReference type="InterPro" id="IPR045865">
    <property type="entry name" value="ACT-like_dom_sf"/>
</dbReference>
<dbReference type="InterPro" id="IPR002912">
    <property type="entry name" value="ACT_dom"/>
</dbReference>
<dbReference type="InterPro" id="IPR001273">
    <property type="entry name" value="ArAA_hydroxylase"/>
</dbReference>
<dbReference type="InterPro" id="IPR018301">
    <property type="entry name" value="ArAA_hydroxylase_Fe/CU_BS"/>
</dbReference>
<dbReference type="InterPro" id="IPR036951">
    <property type="entry name" value="ArAA_hydroxylase_sf"/>
</dbReference>
<dbReference type="InterPro" id="IPR036329">
    <property type="entry name" value="Aro-AA_hydroxylase_C_sf"/>
</dbReference>
<dbReference type="InterPro" id="IPR019774">
    <property type="entry name" value="Aromatic-AA_hydroxylase_C"/>
</dbReference>
<dbReference type="InterPro" id="IPR005963">
    <property type="entry name" value="Trp_5_mOase"/>
</dbReference>
<dbReference type="InterPro" id="IPR041904">
    <property type="entry name" value="TrpOH_cat"/>
</dbReference>
<dbReference type="InterPro" id="IPR019773">
    <property type="entry name" value="Tyrosine_3-monooxygenase-like"/>
</dbReference>
<dbReference type="NCBIfam" id="TIGR01270">
    <property type="entry name" value="Trp_5_monoox"/>
    <property type="match status" value="1"/>
</dbReference>
<dbReference type="PANTHER" id="PTHR11473">
    <property type="entry name" value="AROMATIC AMINO ACID HYDROXYLASE"/>
    <property type="match status" value="1"/>
</dbReference>
<dbReference type="PANTHER" id="PTHR11473:SF23">
    <property type="entry name" value="TRYPTOPHAN 5-HYDROXYLASE 1"/>
    <property type="match status" value="1"/>
</dbReference>
<dbReference type="Pfam" id="PF00351">
    <property type="entry name" value="Biopterin_H"/>
    <property type="match status" value="1"/>
</dbReference>
<dbReference type="PIRSF" id="PIRSF000336">
    <property type="entry name" value="TH"/>
    <property type="match status" value="1"/>
</dbReference>
<dbReference type="PRINTS" id="PR00372">
    <property type="entry name" value="FYWHYDRXLASE"/>
</dbReference>
<dbReference type="SUPFAM" id="SSF55021">
    <property type="entry name" value="ACT-like"/>
    <property type="match status" value="1"/>
</dbReference>
<dbReference type="SUPFAM" id="SSF56534">
    <property type="entry name" value="Aromatic aminoacid monoxygenases, catalytic and oligomerization domains"/>
    <property type="match status" value="1"/>
</dbReference>
<dbReference type="PROSITE" id="PS51671">
    <property type="entry name" value="ACT"/>
    <property type="match status" value="1"/>
</dbReference>
<dbReference type="PROSITE" id="PS00367">
    <property type="entry name" value="BH4_AAA_HYDROXYL_1"/>
    <property type="match status" value="1"/>
</dbReference>
<dbReference type="PROSITE" id="PS51410">
    <property type="entry name" value="BH4_AAA_HYDROXYL_2"/>
    <property type="match status" value="1"/>
</dbReference>